<evidence type="ECO:0000250" key="1">
    <source>
        <dbReference type="UniProtKB" id="P56589"/>
    </source>
</evidence>
<evidence type="ECO:0000255" key="2"/>
<evidence type="ECO:0000305" key="3"/>
<proteinExistence type="evidence at transcript level"/>
<dbReference type="EMBL" id="BC146192">
    <property type="protein sequence ID" value="AAI46193.1"/>
    <property type="molecule type" value="mRNA"/>
</dbReference>
<dbReference type="RefSeq" id="NP_001092457.1">
    <property type="nucleotide sequence ID" value="NM_001098987.1"/>
</dbReference>
<dbReference type="SMR" id="A6H7C2"/>
<dbReference type="FunCoup" id="A6H7C2">
    <property type="interactions" value="2857"/>
</dbReference>
<dbReference type="STRING" id="9913.ENSBTAP00000002294"/>
<dbReference type="PaxDb" id="9913-ENSBTAP00000002294"/>
<dbReference type="GeneID" id="515730"/>
<dbReference type="KEGG" id="bta:515730"/>
<dbReference type="CTD" id="8504"/>
<dbReference type="eggNOG" id="KOG4444">
    <property type="taxonomic scope" value="Eukaryota"/>
</dbReference>
<dbReference type="InParanoid" id="A6H7C2"/>
<dbReference type="OrthoDB" id="45930at2759"/>
<dbReference type="Proteomes" id="UP000009136">
    <property type="component" value="Unplaced"/>
</dbReference>
<dbReference type="GO" id="GO:0005778">
    <property type="term" value="C:peroxisomal membrane"/>
    <property type="evidence" value="ECO:0000318"/>
    <property type="project" value="GO_Central"/>
</dbReference>
<dbReference type="GO" id="GO:0030674">
    <property type="term" value="F:protein-macromolecule adaptor activity"/>
    <property type="evidence" value="ECO:0000318"/>
    <property type="project" value="GO_Central"/>
</dbReference>
<dbReference type="GO" id="GO:0045046">
    <property type="term" value="P:protein import into peroxisome membrane"/>
    <property type="evidence" value="ECO:0000318"/>
    <property type="project" value="GO_Central"/>
</dbReference>
<dbReference type="InterPro" id="IPR006966">
    <property type="entry name" value="Peroxin-3"/>
</dbReference>
<dbReference type="PANTHER" id="PTHR28080">
    <property type="entry name" value="PEROXISOMAL BIOGENESIS FACTOR 3"/>
    <property type="match status" value="1"/>
</dbReference>
<dbReference type="PANTHER" id="PTHR28080:SF1">
    <property type="entry name" value="PEROXISOMAL BIOGENESIS FACTOR 3"/>
    <property type="match status" value="1"/>
</dbReference>
<dbReference type="Pfam" id="PF04882">
    <property type="entry name" value="Peroxin-3"/>
    <property type="match status" value="2"/>
</dbReference>
<sequence length="373" mass="42137">MFRSTWNFLKRHKKKCIFLGTVLGGVYILGKYGQKKIREIQEREAAEYIAQARRQYHFESNQRTCNMTVLSMLPTLREALMQQLNSESLTALLKTRPSNKLEIWEDLKIISFTRSIVAVYSTCMLVVLLRVQLNIIGGYIYLDNAAVGKNGTTVLAPPDVQQQYLSSIQHLLGDGLTELITVIKQAVQKILGSVSLKHSLSLLDLEQKLKEIRDLVEQHKSSSWINNDGSKSLLCHYMMPDEETPLAVQACGLSPRDVTTIKLLNETRDMLESPDFSTVLNTCLSRGFSRLLDNMAEFFRPTEQDLQHGNSINSLSSVSLPLAKIIPIINGQIHSVCSETPSHFVQDLLMMEQVKDFAANVYEAFSTPQQLEK</sequence>
<protein>
    <recommendedName>
        <fullName>Peroxisomal biogenesis factor 3</fullName>
    </recommendedName>
    <alternativeName>
        <fullName>Peroxin-3</fullName>
    </alternativeName>
    <alternativeName>
        <fullName>Peroxisomal assembly protein PEX3</fullName>
    </alternativeName>
</protein>
<reference key="1">
    <citation type="submission" date="2007-06" db="EMBL/GenBank/DDBJ databases">
        <authorList>
            <consortium name="NIH - Mammalian Gene Collection (MGC) project"/>
        </authorList>
    </citation>
    <scope>NUCLEOTIDE SEQUENCE [LARGE SCALE MRNA]</scope>
    <source>
        <strain>Hereford</strain>
        <tissue>Fetal skin</tissue>
    </source>
</reference>
<keyword id="KW-0472">Membrane</keyword>
<keyword id="KW-0576">Peroxisome</keyword>
<keyword id="KW-0962">Peroxisome biogenesis</keyword>
<keyword id="KW-1185">Reference proteome</keyword>
<keyword id="KW-0812">Transmembrane</keyword>
<keyword id="KW-1133">Transmembrane helix</keyword>
<accession>A6H7C2</accession>
<feature type="chain" id="PRO_0000356189" description="Peroxisomal biogenesis factor 3">
    <location>
        <begin position="1"/>
        <end position="373"/>
    </location>
</feature>
<feature type="topological domain" description="Cytoplasmic" evidence="2">
    <location>
        <begin position="1"/>
        <end position="15"/>
    </location>
</feature>
<feature type="transmembrane region" description="Helical" evidence="2">
    <location>
        <begin position="16"/>
        <end position="36"/>
    </location>
</feature>
<feature type="topological domain" description="Peroxisomal" evidence="2">
    <location>
        <begin position="37"/>
        <end position="116"/>
    </location>
</feature>
<feature type="transmembrane region" description="Helical" evidence="2">
    <location>
        <begin position="117"/>
        <end position="140"/>
    </location>
</feature>
<feature type="topological domain" description="Cytoplasmic" evidence="2">
    <location>
        <begin position="141"/>
        <end position="373"/>
    </location>
</feature>
<feature type="region of interest" description="Targeting to peroxisomes" evidence="1">
    <location>
        <begin position="1"/>
        <end position="45"/>
    </location>
</feature>
<feature type="region of interest" description="Interaction with PEX19" evidence="1">
    <location>
        <begin position="120"/>
        <end position="136"/>
    </location>
</feature>
<organism>
    <name type="scientific">Bos taurus</name>
    <name type="common">Bovine</name>
    <dbReference type="NCBI Taxonomy" id="9913"/>
    <lineage>
        <taxon>Eukaryota</taxon>
        <taxon>Metazoa</taxon>
        <taxon>Chordata</taxon>
        <taxon>Craniata</taxon>
        <taxon>Vertebrata</taxon>
        <taxon>Euteleostomi</taxon>
        <taxon>Mammalia</taxon>
        <taxon>Eutheria</taxon>
        <taxon>Laurasiatheria</taxon>
        <taxon>Artiodactyla</taxon>
        <taxon>Ruminantia</taxon>
        <taxon>Pecora</taxon>
        <taxon>Bovidae</taxon>
        <taxon>Bovinae</taxon>
        <taxon>Bos</taxon>
    </lineage>
</organism>
<gene>
    <name type="primary">PEX3</name>
</gene>
<comment type="function">
    <text evidence="1">Involved in peroxisome biosynthesis and integrity. Assembles membrane vesicles before the matrix proteins are translocated. As a docking factor for PEX19, is necessary for the import of peroxisomal membrane proteins in the peroxisomes (By similarity).</text>
</comment>
<comment type="subunit">
    <text evidence="1">Interacts with PEX19.</text>
</comment>
<comment type="subcellular location">
    <subcellularLocation>
        <location evidence="1">Peroxisome membrane</location>
        <topology evidence="1">Multi-pass membrane protein</topology>
    </subcellularLocation>
</comment>
<comment type="similarity">
    <text evidence="3">Belongs to the peroxin-3 family.</text>
</comment>
<name>PEX3_BOVIN</name>